<reference key="1">
    <citation type="journal article" date="2005" name="Science">
        <title>The genome of the basidiomycetous yeast and human pathogen Cryptococcus neoformans.</title>
        <authorList>
            <person name="Loftus B.J."/>
            <person name="Fung E."/>
            <person name="Roncaglia P."/>
            <person name="Rowley D."/>
            <person name="Amedeo P."/>
            <person name="Bruno D."/>
            <person name="Vamathevan J."/>
            <person name="Miranda M."/>
            <person name="Anderson I.J."/>
            <person name="Fraser J.A."/>
            <person name="Allen J.E."/>
            <person name="Bosdet I.E."/>
            <person name="Brent M.R."/>
            <person name="Chiu R."/>
            <person name="Doering T.L."/>
            <person name="Donlin M.J."/>
            <person name="D'Souza C.A."/>
            <person name="Fox D.S."/>
            <person name="Grinberg V."/>
            <person name="Fu J."/>
            <person name="Fukushima M."/>
            <person name="Haas B.J."/>
            <person name="Huang J.C."/>
            <person name="Janbon G."/>
            <person name="Jones S.J.M."/>
            <person name="Koo H.L."/>
            <person name="Krzywinski M.I."/>
            <person name="Kwon-Chung K.J."/>
            <person name="Lengeler K.B."/>
            <person name="Maiti R."/>
            <person name="Marra M.A."/>
            <person name="Marra R.E."/>
            <person name="Mathewson C.A."/>
            <person name="Mitchell T.G."/>
            <person name="Pertea M."/>
            <person name="Riggs F.R."/>
            <person name="Salzberg S.L."/>
            <person name="Schein J.E."/>
            <person name="Shvartsbeyn A."/>
            <person name="Shin H."/>
            <person name="Shumway M."/>
            <person name="Specht C.A."/>
            <person name="Suh B.B."/>
            <person name="Tenney A."/>
            <person name="Utterback T.R."/>
            <person name="Wickes B.L."/>
            <person name="Wortman J.R."/>
            <person name="Wye N.H."/>
            <person name="Kronstad J.W."/>
            <person name="Lodge J.K."/>
            <person name="Heitman J."/>
            <person name="Davis R.W."/>
            <person name="Fraser C.M."/>
            <person name="Hyman R.W."/>
        </authorList>
    </citation>
    <scope>NUCLEOTIDE SEQUENCE [LARGE SCALE GENOMIC DNA]</scope>
    <source>
        <strain>JEC21 / ATCC MYA-565</strain>
    </source>
</reference>
<comment type="function">
    <text evidence="1">Non-catalytic component of the H/ACA small nucleolar ribonucleoprotein (H/ACA snoRNP), which catalyzes pseudouridylation of rRNA and is required for ribosome biogenesis. This involves the isomerization of uridine such that the ribose is subsequently attached to C5, instead of the normal N1. Pseudouridine ('psi') residues may serve to stabilize the conformation of rRNAs. The H/ACA snoRNP complex also mediates pseudouridylation of other types of RNAs. The H/ACA snoRNP complex mediates pseudouridylation at position 93 in U2 snRNA.</text>
</comment>
<comment type="subunit">
    <text evidence="1">Component of the small nucleolar ribonucleoprotein particles containing H/ACA-type snoRNAs (H/ACA snoRNPs).</text>
</comment>
<comment type="subcellular location">
    <subcellularLocation>
        <location evidence="1">Nucleus</location>
        <location evidence="1">Nucleolus</location>
    </subcellularLocation>
</comment>
<comment type="similarity">
    <text evidence="3">Belongs to the GAR1 family.</text>
</comment>
<sequence>MSGRGFSRGGGGGFRGGARGGRGGGRGGFQQRDMGPPDTVLEIGSFQHDVESEMLCSLTAPTKIPYFNAPIYLQNKTQIGKVDEILGPINEVYFTVKMEQGMLASSFKKEDKVYISGEKLLPIERFLPKPKVAGGKVEKRGAQGGRGAPRGRGGAGSRGGRGGFSSRGGPGGRGGARGGAGGRGGFSSRGGGAPRGRGGFRGRGQ</sequence>
<evidence type="ECO:0000250" key="1">
    <source>
        <dbReference type="UniProtKB" id="P28007"/>
    </source>
</evidence>
<evidence type="ECO:0000256" key="2">
    <source>
        <dbReference type="SAM" id="MobiDB-lite"/>
    </source>
</evidence>
<evidence type="ECO:0000305" key="3"/>
<accession>P0CN78</accession>
<accession>Q55MQ5</accession>
<accession>Q5KB30</accession>
<dbReference type="EMBL" id="AE017349">
    <property type="protein sequence ID" value="AAW45593.2"/>
    <property type="molecule type" value="Genomic_DNA"/>
</dbReference>
<dbReference type="RefSeq" id="XP_572900.1">
    <property type="nucleotide sequence ID" value="XM_572900.1"/>
</dbReference>
<dbReference type="SMR" id="P0CN78"/>
<dbReference type="FunCoup" id="P0CN78">
    <property type="interactions" value="353"/>
</dbReference>
<dbReference type="STRING" id="214684.P0CN78"/>
<dbReference type="PaxDb" id="214684-P0CN78"/>
<dbReference type="EnsemblFungi" id="AAW45593">
    <property type="protein sequence ID" value="AAW45593"/>
    <property type="gene ID" value="CNI03970"/>
</dbReference>
<dbReference type="eggNOG" id="KOG3262">
    <property type="taxonomic scope" value="Eukaryota"/>
</dbReference>
<dbReference type="HOGENOM" id="CLU_080002_1_0_1"/>
<dbReference type="InParanoid" id="P0CN78"/>
<dbReference type="Proteomes" id="UP000002149">
    <property type="component" value="Chromosome 9"/>
</dbReference>
<dbReference type="GO" id="GO:0031429">
    <property type="term" value="C:box H/ACA snoRNP complex"/>
    <property type="evidence" value="ECO:0000318"/>
    <property type="project" value="GO_Central"/>
</dbReference>
<dbReference type="GO" id="GO:0034513">
    <property type="term" value="F:box H/ACA snoRNA binding"/>
    <property type="evidence" value="ECO:0000318"/>
    <property type="project" value="GO_Central"/>
</dbReference>
<dbReference type="GO" id="GO:0000454">
    <property type="term" value="P:snoRNA guided rRNA pseudouridine synthesis"/>
    <property type="evidence" value="ECO:0000318"/>
    <property type="project" value="GO_Central"/>
</dbReference>
<dbReference type="GO" id="GO:0031120">
    <property type="term" value="P:snRNA pseudouridine synthesis"/>
    <property type="evidence" value="ECO:0007669"/>
    <property type="project" value="EnsemblFungi"/>
</dbReference>
<dbReference type="FunFam" id="2.40.10.230:FF:000001">
    <property type="entry name" value="H/ACA ribonucleoprotein complex subunit"/>
    <property type="match status" value="1"/>
</dbReference>
<dbReference type="Gene3D" id="2.40.10.230">
    <property type="entry name" value="Probable tRNA pseudouridine synthase domain"/>
    <property type="match status" value="1"/>
</dbReference>
<dbReference type="InterPro" id="IPR038664">
    <property type="entry name" value="Gar1/Naf1_Cbf5-bd_sf"/>
</dbReference>
<dbReference type="InterPro" id="IPR007504">
    <property type="entry name" value="H/ACA_rnp_Gar1/Naf1"/>
</dbReference>
<dbReference type="InterPro" id="IPR009000">
    <property type="entry name" value="Transl_B-barrel_sf"/>
</dbReference>
<dbReference type="PANTHER" id="PTHR23237:SF6">
    <property type="entry name" value="H_ACA RIBONUCLEOPROTEIN COMPLEX SUBUNIT 1"/>
    <property type="match status" value="1"/>
</dbReference>
<dbReference type="PANTHER" id="PTHR23237">
    <property type="entry name" value="NUCLEOLAR PROTEIN FAMILY A MEMBER 1 SNORNP PROTEIN GAR1"/>
    <property type="match status" value="1"/>
</dbReference>
<dbReference type="Pfam" id="PF04410">
    <property type="entry name" value="Gar1"/>
    <property type="match status" value="1"/>
</dbReference>
<dbReference type="SUPFAM" id="SSF50447">
    <property type="entry name" value="Translation proteins"/>
    <property type="match status" value="1"/>
</dbReference>
<protein>
    <recommendedName>
        <fullName>H/ACA ribonucleoprotein complex subunit GAR1</fullName>
    </recommendedName>
    <alternativeName>
        <fullName>snoRNP protein GAR1</fullName>
    </alternativeName>
</protein>
<name>GAR1_CRYNJ</name>
<proteinExistence type="inferred from homology"/>
<keyword id="KW-0539">Nucleus</keyword>
<keyword id="KW-1185">Reference proteome</keyword>
<keyword id="KW-0677">Repeat</keyword>
<keyword id="KW-0687">Ribonucleoprotein</keyword>
<keyword id="KW-0690">Ribosome biogenesis</keyword>
<keyword id="KW-0694">RNA-binding</keyword>
<keyword id="KW-0698">rRNA processing</keyword>
<feature type="chain" id="PRO_0000327527" description="H/ACA ribonucleoprotein complex subunit GAR1">
    <location>
        <begin position="1"/>
        <end position="205"/>
    </location>
</feature>
<feature type="region of interest" description="Disordered" evidence="2">
    <location>
        <begin position="1"/>
        <end position="38"/>
    </location>
</feature>
<feature type="region of interest" description="RGG-box 1">
    <location>
        <begin position="4"/>
        <end position="28"/>
    </location>
</feature>
<feature type="region of interest" description="Disordered" evidence="2">
    <location>
        <begin position="132"/>
        <end position="205"/>
    </location>
</feature>
<feature type="region of interest" description="RGG-box 2">
    <location>
        <begin position="152"/>
        <end position="204"/>
    </location>
</feature>
<feature type="compositionally biased region" description="Gly residues" evidence="2">
    <location>
        <begin position="1"/>
        <end position="28"/>
    </location>
</feature>
<feature type="compositionally biased region" description="Gly residues" evidence="2">
    <location>
        <begin position="142"/>
        <end position="197"/>
    </location>
</feature>
<organism>
    <name type="scientific">Cryptococcus neoformans var. neoformans serotype D (strain JEC21 / ATCC MYA-565)</name>
    <name type="common">Filobasidiella neoformans</name>
    <dbReference type="NCBI Taxonomy" id="214684"/>
    <lineage>
        <taxon>Eukaryota</taxon>
        <taxon>Fungi</taxon>
        <taxon>Dikarya</taxon>
        <taxon>Basidiomycota</taxon>
        <taxon>Agaricomycotina</taxon>
        <taxon>Tremellomycetes</taxon>
        <taxon>Tremellales</taxon>
        <taxon>Cryptococcaceae</taxon>
        <taxon>Cryptococcus</taxon>
        <taxon>Cryptococcus neoformans species complex</taxon>
    </lineage>
</organism>
<gene>
    <name type="primary">GAR1</name>
    <name type="ordered locus">CNI03970</name>
</gene>